<organism>
    <name type="scientific">Drosophila melanogaster</name>
    <name type="common">Fruit fly</name>
    <dbReference type="NCBI Taxonomy" id="7227"/>
    <lineage>
        <taxon>Eukaryota</taxon>
        <taxon>Metazoa</taxon>
        <taxon>Ecdysozoa</taxon>
        <taxon>Arthropoda</taxon>
        <taxon>Hexapoda</taxon>
        <taxon>Insecta</taxon>
        <taxon>Pterygota</taxon>
        <taxon>Neoptera</taxon>
        <taxon>Endopterygota</taxon>
        <taxon>Diptera</taxon>
        <taxon>Brachycera</taxon>
        <taxon>Muscomorpha</taxon>
        <taxon>Ephydroidea</taxon>
        <taxon>Drosophilidae</taxon>
        <taxon>Drosophila</taxon>
        <taxon>Sophophora</taxon>
    </lineage>
</organism>
<proteinExistence type="inferred from homology"/>
<keyword id="KW-0963">Cytoplasm</keyword>
<keyword id="KW-1185">Reference proteome</keyword>
<keyword id="KW-0833">Ubl conjugation pathway</keyword>
<reference key="1">
    <citation type="journal article" date="2000" name="Science">
        <title>The genome sequence of Drosophila melanogaster.</title>
        <authorList>
            <person name="Adams M.D."/>
            <person name="Celniker S.E."/>
            <person name="Holt R.A."/>
            <person name="Evans C.A."/>
            <person name="Gocayne J.D."/>
            <person name="Amanatides P.G."/>
            <person name="Scherer S.E."/>
            <person name="Li P.W."/>
            <person name="Hoskins R.A."/>
            <person name="Galle R.F."/>
            <person name="George R.A."/>
            <person name="Lewis S.E."/>
            <person name="Richards S."/>
            <person name="Ashburner M."/>
            <person name="Henderson S.N."/>
            <person name="Sutton G.G."/>
            <person name="Wortman J.R."/>
            <person name="Yandell M.D."/>
            <person name="Zhang Q."/>
            <person name="Chen L.X."/>
            <person name="Brandon R.C."/>
            <person name="Rogers Y.-H.C."/>
            <person name="Blazej R.G."/>
            <person name="Champe M."/>
            <person name="Pfeiffer B.D."/>
            <person name="Wan K.H."/>
            <person name="Doyle C."/>
            <person name="Baxter E.G."/>
            <person name="Helt G."/>
            <person name="Nelson C.R."/>
            <person name="Miklos G.L.G."/>
            <person name="Abril J.F."/>
            <person name="Agbayani A."/>
            <person name="An H.-J."/>
            <person name="Andrews-Pfannkoch C."/>
            <person name="Baldwin D."/>
            <person name="Ballew R.M."/>
            <person name="Basu A."/>
            <person name="Baxendale J."/>
            <person name="Bayraktaroglu L."/>
            <person name="Beasley E.M."/>
            <person name="Beeson K.Y."/>
            <person name="Benos P.V."/>
            <person name="Berman B.P."/>
            <person name="Bhandari D."/>
            <person name="Bolshakov S."/>
            <person name="Borkova D."/>
            <person name="Botchan M.R."/>
            <person name="Bouck J."/>
            <person name="Brokstein P."/>
            <person name="Brottier P."/>
            <person name="Burtis K.C."/>
            <person name="Busam D.A."/>
            <person name="Butler H."/>
            <person name="Cadieu E."/>
            <person name="Center A."/>
            <person name="Chandra I."/>
            <person name="Cherry J.M."/>
            <person name="Cawley S."/>
            <person name="Dahlke C."/>
            <person name="Davenport L.B."/>
            <person name="Davies P."/>
            <person name="de Pablos B."/>
            <person name="Delcher A."/>
            <person name="Deng Z."/>
            <person name="Mays A.D."/>
            <person name="Dew I."/>
            <person name="Dietz S.M."/>
            <person name="Dodson K."/>
            <person name="Doup L.E."/>
            <person name="Downes M."/>
            <person name="Dugan-Rocha S."/>
            <person name="Dunkov B.C."/>
            <person name="Dunn P."/>
            <person name="Durbin K.J."/>
            <person name="Evangelista C.C."/>
            <person name="Ferraz C."/>
            <person name="Ferriera S."/>
            <person name="Fleischmann W."/>
            <person name="Fosler C."/>
            <person name="Gabrielian A.E."/>
            <person name="Garg N.S."/>
            <person name="Gelbart W.M."/>
            <person name="Glasser K."/>
            <person name="Glodek A."/>
            <person name="Gong F."/>
            <person name="Gorrell J.H."/>
            <person name="Gu Z."/>
            <person name="Guan P."/>
            <person name="Harris M."/>
            <person name="Harris N.L."/>
            <person name="Harvey D.A."/>
            <person name="Heiman T.J."/>
            <person name="Hernandez J.R."/>
            <person name="Houck J."/>
            <person name="Hostin D."/>
            <person name="Houston K.A."/>
            <person name="Howland T.J."/>
            <person name="Wei M.-H."/>
            <person name="Ibegwam C."/>
            <person name="Jalali M."/>
            <person name="Kalush F."/>
            <person name="Karpen G.H."/>
            <person name="Ke Z."/>
            <person name="Kennison J.A."/>
            <person name="Ketchum K.A."/>
            <person name="Kimmel B.E."/>
            <person name="Kodira C.D."/>
            <person name="Kraft C.L."/>
            <person name="Kravitz S."/>
            <person name="Kulp D."/>
            <person name="Lai Z."/>
            <person name="Lasko P."/>
            <person name="Lei Y."/>
            <person name="Levitsky A.A."/>
            <person name="Li J.H."/>
            <person name="Li Z."/>
            <person name="Liang Y."/>
            <person name="Lin X."/>
            <person name="Liu X."/>
            <person name="Mattei B."/>
            <person name="McIntosh T.C."/>
            <person name="McLeod M.P."/>
            <person name="McPherson D."/>
            <person name="Merkulov G."/>
            <person name="Milshina N.V."/>
            <person name="Mobarry C."/>
            <person name="Morris J."/>
            <person name="Moshrefi A."/>
            <person name="Mount S.M."/>
            <person name="Moy M."/>
            <person name="Murphy B."/>
            <person name="Murphy L."/>
            <person name="Muzny D.M."/>
            <person name="Nelson D.L."/>
            <person name="Nelson D.R."/>
            <person name="Nelson K.A."/>
            <person name="Nixon K."/>
            <person name="Nusskern D.R."/>
            <person name="Pacleb J.M."/>
            <person name="Palazzolo M."/>
            <person name="Pittman G.S."/>
            <person name="Pan S."/>
            <person name="Pollard J."/>
            <person name="Puri V."/>
            <person name="Reese M.G."/>
            <person name="Reinert K."/>
            <person name="Remington K."/>
            <person name="Saunders R.D.C."/>
            <person name="Scheeler F."/>
            <person name="Shen H."/>
            <person name="Shue B.C."/>
            <person name="Siden-Kiamos I."/>
            <person name="Simpson M."/>
            <person name="Skupski M.P."/>
            <person name="Smith T.J."/>
            <person name="Spier E."/>
            <person name="Spradling A.C."/>
            <person name="Stapleton M."/>
            <person name="Strong R."/>
            <person name="Sun E."/>
            <person name="Svirskas R."/>
            <person name="Tector C."/>
            <person name="Turner R."/>
            <person name="Venter E."/>
            <person name="Wang A.H."/>
            <person name="Wang X."/>
            <person name="Wang Z.-Y."/>
            <person name="Wassarman D.A."/>
            <person name="Weinstock G.M."/>
            <person name="Weissenbach J."/>
            <person name="Williams S.M."/>
            <person name="Woodage T."/>
            <person name="Worley K.C."/>
            <person name="Wu D."/>
            <person name="Yang S."/>
            <person name="Yao Q.A."/>
            <person name="Ye J."/>
            <person name="Yeh R.-F."/>
            <person name="Zaveri J.S."/>
            <person name="Zhan M."/>
            <person name="Zhang G."/>
            <person name="Zhao Q."/>
            <person name="Zheng L."/>
            <person name="Zheng X.H."/>
            <person name="Zhong F.N."/>
            <person name="Zhong W."/>
            <person name="Zhou X."/>
            <person name="Zhu S.C."/>
            <person name="Zhu X."/>
            <person name="Smith H.O."/>
            <person name="Gibbs R.A."/>
            <person name="Myers E.W."/>
            <person name="Rubin G.M."/>
            <person name="Venter J.C."/>
        </authorList>
    </citation>
    <scope>NUCLEOTIDE SEQUENCE [LARGE SCALE GENOMIC DNA]</scope>
    <source>
        <strain>Berkeley</strain>
    </source>
</reference>
<reference key="2">
    <citation type="journal article" date="2002" name="Genome Biol.">
        <title>Annotation of the Drosophila melanogaster euchromatic genome: a systematic review.</title>
        <authorList>
            <person name="Misra S."/>
            <person name="Crosby M.A."/>
            <person name="Mungall C.J."/>
            <person name="Matthews B.B."/>
            <person name="Campbell K.S."/>
            <person name="Hradecky P."/>
            <person name="Huang Y."/>
            <person name="Kaminker J.S."/>
            <person name="Millburn G.H."/>
            <person name="Prochnik S.E."/>
            <person name="Smith C.D."/>
            <person name="Tupy J.L."/>
            <person name="Whitfield E.J."/>
            <person name="Bayraktaroglu L."/>
            <person name="Berman B.P."/>
            <person name="Bettencourt B.R."/>
            <person name="Celniker S.E."/>
            <person name="de Grey A.D.N.J."/>
            <person name="Drysdale R.A."/>
            <person name="Harris N.L."/>
            <person name="Richter J."/>
            <person name="Russo S."/>
            <person name="Schroeder A.J."/>
            <person name="Shu S.Q."/>
            <person name="Stapleton M."/>
            <person name="Yamada C."/>
            <person name="Ashburner M."/>
            <person name="Gelbart W.M."/>
            <person name="Rubin G.M."/>
            <person name="Lewis S.E."/>
        </authorList>
    </citation>
    <scope>GENOME REANNOTATION</scope>
    <source>
        <strain>Berkeley</strain>
    </source>
</reference>
<reference key="3">
    <citation type="submission" date="2005-06" db="EMBL/GenBank/DDBJ databases">
        <authorList>
            <person name="Stapleton M."/>
            <person name="Carlson J.W."/>
            <person name="Chavez C."/>
            <person name="Frise E."/>
            <person name="George R.A."/>
            <person name="Pacleb J.M."/>
            <person name="Park S."/>
            <person name="Wan K.H."/>
            <person name="Yu C."/>
            <person name="Celniker S.E."/>
        </authorList>
    </citation>
    <scope>NUCLEOTIDE SEQUENCE [LARGE SCALE MRNA]</scope>
    <source>
        <strain>Berkeley</strain>
    </source>
</reference>
<gene>
    <name type="primary">ubl</name>
    <name type="synonym">l(2)k03203</name>
    <name type="ORF">CG3450</name>
</gene>
<protein>
    <recommendedName>
        <fullName>Ubiquitin-like protein 5</fullName>
    </recommendedName>
</protein>
<sequence length="73" mass="8570">MIEITCNDRLGKKVRVKCNPDDTIGDLKKLIAAQTGTKHEKIVLKKWYTIFKDPIRLSDYEIHDGMNLELYYQ</sequence>
<dbReference type="EMBL" id="AE013599">
    <property type="protein sequence ID" value="AAF57398.1"/>
    <property type="molecule type" value="Genomic_DNA"/>
</dbReference>
<dbReference type="EMBL" id="BT023690">
    <property type="protein sequence ID" value="AAY85090.1"/>
    <property type="molecule type" value="mRNA"/>
</dbReference>
<dbReference type="RefSeq" id="NP_610239.1">
    <property type="nucleotide sequence ID" value="NM_136395.4"/>
</dbReference>
<dbReference type="SMR" id="Q9V998"/>
<dbReference type="BioGRID" id="61488">
    <property type="interactions" value="1"/>
</dbReference>
<dbReference type="FunCoup" id="Q9V998">
    <property type="interactions" value="1729"/>
</dbReference>
<dbReference type="STRING" id="7227.FBpp0085529"/>
<dbReference type="PaxDb" id="7227-FBpp0085529"/>
<dbReference type="DNASU" id="35592"/>
<dbReference type="EnsemblMetazoa" id="FBtr0086211">
    <property type="protein sequence ID" value="FBpp0085529"/>
    <property type="gene ID" value="FBgn0022224"/>
</dbReference>
<dbReference type="GeneID" id="35592"/>
<dbReference type="KEGG" id="dme:Dmel_CG3450"/>
<dbReference type="AGR" id="FB:FBgn0022224"/>
<dbReference type="CTD" id="35592"/>
<dbReference type="FlyBase" id="FBgn0022224">
    <property type="gene designation" value="ubl"/>
</dbReference>
<dbReference type="VEuPathDB" id="VectorBase:FBgn0022224"/>
<dbReference type="eggNOG" id="KOG3493">
    <property type="taxonomic scope" value="Eukaryota"/>
</dbReference>
<dbReference type="GeneTree" id="ENSGT00390000001945"/>
<dbReference type="HOGENOM" id="CLU_156193_2_0_1"/>
<dbReference type="InParanoid" id="Q9V998"/>
<dbReference type="OMA" id="GMSLEMQ"/>
<dbReference type="OrthoDB" id="3881at2759"/>
<dbReference type="PhylomeDB" id="Q9V998"/>
<dbReference type="BioGRID-ORCS" id="35592">
    <property type="hits" value="1 hit in 1 CRISPR screen"/>
</dbReference>
<dbReference type="GenomeRNAi" id="35592"/>
<dbReference type="PRO" id="PR:Q9V998"/>
<dbReference type="Proteomes" id="UP000000803">
    <property type="component" value="Chromosome 2R"/>
</dbReference>
<dbReference type="Bgee" id="FBgn0022224">
    <property type="expression patterns" value="Expressed in saliva-secreting gland and 97 other cell types or tissues"/>
</dbReference>
<dbReference type="GO" id="GO:0005737">
    <property type="term" value="C:cytoplasm"/>
    <property type="evidence" value="ECO:0000250"/>
    <property type="project" value="UniProtKB"/>
</dbReference>
<dbReference type="GO" id="GO:0005634">
    <property type="term" value="C:nucleus"/>
    <property type="evidence" value="ECO:0000318"/>
    <property type="project" value="GO_Central"/>
</dbReference>
<dbReference type="GO" id="GO:0031386">
    <property type="term" value="F:protein tag activity"/>
    <property type="evidence" value="ECO:0000318"/>
    <property type="project" value="GO_Central"/>
</dbReference>
<dbReference type="GO" id="GO:0000398">
    <property type="term" value="P:mRNA splicing, via spliceosome"/>
    <property type="evidence" value="ECO:0000318"/>
    <property type="project" value="GO_Central"/>
</dbReference>
<dbReference type="GO" id="GO:0036211">
    <property type="term" value="P:protein modification process"/>
    <property type="evidence" value="ECO:0000318"/>
    <property type="project" value="GO_Central"/>
</dbReference>
<dbReference type="CDD" id="cd01791">
    <property type="entry name" value="Ubl_UBL5"/>
    <property type="match status" value="1"/>
</dbReference>
<dbReference type="FunFam" id="3.10.20.90:FF:000052">
    <property type="entry name" value="Ubiquitin-like protein 5"/>
    <property type="match status" value="1"/>
</dbReference>
<dbReference type="Gene3D" id="3.10.20.90">
    <property type="entry name" value="Phosphatidylinositol 3-kinase Catalytic Subunit, Chain A, domain 1"/>
    <property type="match status" value="1"/>
</dbReference>
<dbReference type="InterPro" id="IPR039732">
    <property type="entry name" value="Hub1/Ubl5"/>
</dbReference>
<dbReference type="InterPro" id="IPR000626">
    <property type="entry name" value="Ubiquitin-like_dom"/>
</dbReference>
<dbReference type="InterPro" id="IPR029071">
    <property type="entry name" value="Ubiquitin-like_domsf"/>
</dbReference>
<dbReference type="PANTHER" id="PTHR13042">
    <property type="entry name" value="UBIQUITIN-LIKE PROTEIN 5"/>
    <property type="match status" value="1"/>
</dbReference>
<dbReference type="Pfam" id="PF14560">
    <property type="entry name" value="Ubiquitin_2"/>
    <property type="match status" value="1"/>
</dbReference>
<dbReference type="SUPFAM" id="SSF54236">
    <property type="entry name" value="Ubiquitin-like"/>
    <property type="match status" value="1"/>
</dbReference>
<dbReference type="PROSITE" id="PS50053">
    <property type="entry name" value="UBIQUITIN_2"/>
    <property type="match status" value="1"/>
</dbReference>
<evidence type="ECO:0000250" key="1"/>
<evidence type="ECO:0000255" key="2">
    <source>
        <dbReference type="PROSITE-ProRule" id="PRU00214"/>
    </source>
</evidence>
<feature type="chain" id="PRO_0000114872" description="Ubiquitin-like protein 5">
    <location>
        <begin position="1"/>
        <end position="73"/>
    </location>
</feature>
<feature type="domain" description="Ubiquitin-like" evidence="2">
    <location>
        <begin position="1"/>
        <end position="73"/>
    </location>
</feature>
<name>UBL5_DROME</name>
<accession>Q9V998</accession>
<accession>Q4QPS6</accession>
<comment type="subcellular location">
    <subcellularLocation>
        <location evidence="1">Cytoplasm</location>
    </subcellularLocation>
</comment>